<protein>
    <recommendedName>
        <fullName evidence="1">2-isopropylmalate synthase</fullName>
        <ecNumber evidence="1">2.3.3.13</ecNumber>
    </recommendedName>
    <alternativeName>
        <fullName evidence="1">Alpha-IPM synthase</fullName>
    </alternativeName>
    <alternativeName>
        <fullName evidence="1">Alpha-isopropylmalate synthase</fullName>
    </alternativeName>
</protein>
<comment type="function">
    <text evidence="1">Catalyzes the condensation of the acetyl group of acetyl-CoA with 3-methyl-2-oxobutanoate (2-ketoisovalerate) to form 3-carboxy-3-hydroxy-4-methylpentanoate (2-isopropylmalate).</text>
</comment>
<comment type="catalytic activity">
    <reaction evidence="1">
        <text>3-methyl-2-oxobutanoate + acetyl-CoA + H2O = (2S)-2-isopropylmalate + CoA + H(+)</text>
        <dbReference type="Rhea" id="RHEA:21524"/>
        <dbReference type="ChEBI" id="CHEBI:1178"/>
        <dbReference type="ChEBI" id="CHEBI:11851"/>
        <dbReference type="ChEBI" id="CHEBI:15377"/>
        <dbReference type="ChEBI" id="CHEBI:15378"/>
        <dbReference type="ChEBI" id="CHEBI:57287"/>
        <dbReference type="ChEBI" id="CHEBI:57288"/>
        <dbReference type="EC" id="2.3.3.13"/>
    </reaction>
</comment>
<comment type="cofactor">
    <cofactor evidence="1">
        <name>Mn(2+)</name>
        <dbReference type="ChEBI" id="CHEBI:29035"/>
    </cofactor>
</comment>
<comment type="pathway">
    <text evidence="1">Amino-acid biosynthesis; L-leucine biosynthesis; L-leucine from 3-methyl-2-oxobutanoate: step 1/4.</text>
</comment>
<comment type="subunit">
    <text evidence="1">Homodimer.</text>
</comment>
<comment type="subcellular location">
    <subcellularLocation>
        <location evidence="1">Cytoplasm</location>
    </subcellularLocation>
</comment>
<comment type="similarity">
    <text evidence="1">Belongs to the alpha-IPM synthase/homocitrate synthase family. LeuA type 1 subfamily.</text>
</comment>
<reference key="1">
    <citation type="submission" date="2009-06" db="EMBL/GenBank/DDBJ databases">
        <title>Complete sequence of chromosome of Geopacillus sp. WCH70.</title>
        <authorList>
            <consortium name="US DOE Joint Genome Institute"/>
            <person name="Lucas S."/>
            <person name="Copeland A."/>
            <person name="Lapidus A."/>
            <person name="Glavina del Rio T."/>
            <person name="Dalin E."/>
            <person name="Tice H."/>
            <person name="Bruce D."/>
            <person name="Goodwin L."/>
            <person name="Pitluck S."/>
            <person name="Chertkov O."/>
            <person name="Brettin T."/>
            <person name="Detter J.C."/>
            <person name="Han C."/>
            <person name="Larimer F."/>
            <person name="Land M."/>
            <person name="Hauser L."/>
            <person name="Kyrpides N."/>
            <person name="Mikhailova N."/>
            <person name="Brumm P."/>
            <person name="Mead D.A."/>
            <person name="Richardson P."/>
        </authorList>
    </citation>
    <scope>NUCLEOTIDE SEQUENCE [LARGE SCALE GENOMIC DNA]</scope>
    <source>
        <strain>WCH70</strain>
    </source>
</reference>
<dbReference type="EC" id="2.3.3.13" evidence="1"/>
<dbReference type="EMBL" id="CP001638">
    <property type="protein sequence ID" value="ACS25288.1"/>
    <property type="molecule type" value="Genomic_DNA"/>
</dbReference>
<dbReference type="SMR" id="C5D5M0"/>
<dbReference type="STRING" id="471223.GWCH70_2593"/>
<dbReference type="KEGG" id="gwc:GWCH70_2593"/>
<dbReference type="eggNOG" id="COG0119">
    <property type="taxonomic scope" value="Bacteria"/>
</dbReference>
<dbReference type="HOGENOM" id="CLU_022158_0_1_9"/>
<dbReference type="OrthoDB" id="9804858at2"/>
<dbReference type="UniPathway" id="UPA00048">
    <property type="reaction ID" value="UER00070"/>
</dbReference>
<dbReference type="GO" id="GO:0005737">
    <property type="term" value="C:cytoplasm"/>
    <property type="evidence" value="ECO:0007669"/>
    <property type="project" value="UniProtKB-SubCell"/>
</dbReference>
<dbReference type="GO" id="GO:0003852">
    <property type="term" value="F:2-isopropylmalate synthase activity"/>
    <property type="evidence" value="ECO:0007669"/>
    <property type="project" value="UniProtKB-UniRule"/>
</dbReference>
<dbReference type="GO" id="GO:0003985">
    <property type="term" value="F:acetyl-CoA C-acetyltransferase activity"/>
    <property type="evidence" value="ECO:0007669"/>
    <property type="project" value="UniProtKB-UniRule"/>
</dbReference>
<dbReference type="GO" id="GO:0030145">
    <property type="term" value="F:manganese ion binding"/>
    <property type="evidence" value="ECO:0007669"/>
    <property type="project" value="UniProtKB-UniRule"/>
</dbReference>
<dbReference type="GO" id="GO:0009098">
    <property type="term" value="P:L-leucine biosynthetic process"/>
    <property type="evidence" value="ECO:0007669"/>
    <property type="project" value="UniProtKB-UniRule"/>
</dbReference>
<dbReference type="CDD" id="cd07940">
    <property type="entry name" value="DRE_TIM_IPMS"/>
    <property type="match status" value="1"/>
</dbReference>
<dbReference type="FunFam" id="1.10.238.260:FF:000001">
    <property type="entry name" value="2-isopropylmalate synthase"/>
    <property type="match status" value="1"/>
</dbReference>
<dbReference type="FunFam" id="3.20.20.70:FF:000010">
    <property type="entry name" value="2-isopropylmalate synthase"/>
    <property type="match status" value="1"/>
</dbReference>
<dbReference type="FunFam" id="3.30.160.270:FF:000003">
    <property type="entry name" value="2-isopropylmalate synthase"/>
    <property type="match status" value="1"/>
</dbReference>
<dbReference type="Gene3D" id="1.10.238.260">
    <property type="match status" value="1"/>
</dbReference>
<dbReference type="Gene3D" id="3.30.160.270">
    <property type="match status" value="1"/>
</dbReference>
<dbReference type="Gene3D" id="3.20.20.70">
    <property type="entry name" value="Aldolase class I"/>
    <property type="match status" value="1"/>
</dbReference>
<dbReference type="HAMAP" id="MF_01025">
    <property type="entry name" value="LeuA_type1"/>
    <property type="match status" value="1"/>
</dbReference>
<dbReference type="InterPro" id="IPR050073">
    <property type="entry name" value="2-IPM_HCS-like"/>
</dbReference>
<dbReference type="InterPro" id="IPR013709">
    <property type="entry name" value="2-isopropylmalate_synth_dimer"/>
</dbReference>
<dbReference type="InterPro" id="IPR002034">
    <property type="entry name" value="AIPM/Hcit_synth_CS"/>
</dbReference>
<dbReference type="InterPro" id="IPR013785">
    <property type="entry name" value="Aldolase_TIM"/>
</dbReference>
<dbReference type="InterPro" id="IPR054691">
    <property type="entry name" value="LeuA/HCS_post-cat"/>
</dbReference>
<dbReference type="InterPro" id="IPR036230">
    <property type="entry name" value="LeuA_allosteric_dom_sf"/>
</dbReference>
<dbReference type="InterPro" id="IPR005671">
    <property type="entry name" value="LeuA_bact_synth"/>
</dbReference>
<dbReference type="InterPro" id="IPR000891">
    <property type="entry name" value="PYR_CT"/>
</dbReference>
<dbReference type="NCBIfam" id="TIGR00973">
    <property type="entry name" value="leuA_bact"/>
    <property type="match status" value="1"/>
</dbReference>
<dbReference type="NCBIfam" id="NF002085">
    <property type="entry name" value="PRK00915.1-2"/>
    <property type="match status" value="1"/>
</dbReference>
<dbReference type="NCBIfam" id="NF002086">
    <property type="entry name" value="PRK00915.1-3"/>
    <property type="match status" value="1"/>
</dbReference>
<dbReference type="NCBIfam" id="NF002088">
    <property type="entry name" value="PRK00915.1-5"/>
    <property type="match status" value="1"/>
</dbReference>
<dbReference type="PANTHER" id="PTHR10277:SF9">
    <property type="entry name" value="2-ISOPROPYLMALATE SYNTHASE 1, CHLOROPLASTIC-RELATED"/>
    <property type="match status" value="1"/>
</dbReference>
<dbReference type="PANTHER" id="PTHR10277">
    <property type="entry name" value="HOMOCITRATE SYNTHASE-RELATED"/>
    <property type="match status" value="1"/>
</dbReference>
<dbReference type="Pfam" id="PF22617">
    <property type="entry name" value="HCS_D2"/>
    <property type="match status" value="1"/>
</dbReference>
<dbReference type="Pfam" id="PF00682">
    <property type="entry name" value="HMGL-like"/>
    <property type="match status" value="1"/>
</dbReference>
<dbReference type="Pfam" id="PF08502">
    <property type="entry name" value="LeuA_dimer"/>
    <property type="match status" value="1"/>
</dbReference>
<dbReference type="SMART" id="SM00917">
    <property type="entry name" value="LeuA_dimer"/>
    <property type="match status" value="1"/>
</dbReference>
<dbReference type="SUPFAM" id="SSF110921">
    <property type="entry name" value="2-isopropylmalate synthase LeuA, allosteric (dimerisation) domain"/>
    <property type="match status" value="1"/>
</dbReference>
<dbReference type="SUPFAM" id="SSF51569">
    <property type="entry name" value="Aldolase"/>
    <property type="match status" value="1"/>
</dbReference>
<dbReference type="PROSITE" id="PS00815">
    <property type="entry name" value="AIPM_HOMOCIT_SYNTH_1"/>
    <property type="match status" value="1"/>
</dbReference>
<dbReference type="PROSITE" id="PS00816">
    <property type="entry name" value="AIPM_HOMOCIT_SYNTH_2"/>
    <property type="match status" value="1"/>
</dbReference>
<dbReference type="PROSITE" id="PS50991">
    <property type="entry name" value="PYR_CT"/>
    <property type="match status" value="1"/>
</dbReference>
<name>LEU1_GEOSW</name>
<keyword id="KW-0028">Amino-acid biosynthesis</keyword>
<keyword id="KW-0100">Branched-chain amino acid biosynthesis</keyword>
<keyword id="KW-0963">Cytoplasm</keyword>
<keyword id="KW-0432">Leucine biosynthesis</keyword>
<keyword id="KW-0464">Manganese</keyword>
<keyword id="KW-0479">Metal-binding</keyword>
<keyword id="KW-0808">Transferase</keyword>
<sequence length="515" mass="56758">MRKINIFDTTLRDGEQSAGINLNLQEKLEIARQLERLGVDIIEAGFPASSKGDFQAVKQIAETIKTCSVTGLARSVQSDIDAAWEALKGGAEPRLHLFIATSPIHMKYKLQMTPEQVIETAVESVKYAKRYFPIVQWSAEDACRSELPFLAKIITEVIKAGATVINIPDTVGYITPKEYGNIFTFLSNNVPNIEKVSLSAHCHDDLGMAVANSLAAIEHGATQIEGTINGIGERAGNAALEEIAVALYIRKDYYQAETRLNLQEIKRTSNLVSKLTGVVIPPNKAVIGKNAFAHESGIHQDGVLKEKTTYEIISPELVGVQSNSMVLGKHSGRHALRNRVEELGYTLSDEEVNKLFVRFKELADKKKDITDDDLVALIFEEKFDHFKDFYQLSSLQVQYGTNQIPTAVVVLKDGQGNEIQEAATGAGSVEALYNTLERCFKTSVTLLDYRIESVSGGRDALAQVFVKVRVNDIETSGRGTAQDVLEASAKAYINAVNRVFMIETMRAENQKVAMQ</sequence>
<accession>C5D5M0</accession>
<organism>
    <name type="scientific">Geobacillus sp. (strain WCH70)</name>
    <dbReference type="NCBI Taxonomy" id="471223"/>
    <lineage>
        <taxon>Bacteria</taxon>
        <taxon>Bacillati</taxon>
        <taxon>Bacillota</taxon>
        <taxon>Bacilli</taxon>
        <taxon>Bacillales</taxon>
        <taxon>Anoxybacillaceae</taxon>
        <taxon>Geobacillus</taxon>
    </lineage>
</organism>
<proteinExistence type="inferred from homology"/>
<gene>
    <name evidence="1" type="primary">leuA</name>
    <name type="ordered locus">GWCH70_2593</name>
</gene>
<feature type="chain" id="PRO_1000213314" description="2-isopropylmalate synthase">
    <location>
        <begin position="1"/>
        <end position="515"/>
    </location>
</feature>
<feature type="domain" description="Pyruvate carboxyltransferase" evidence="1">
    <location>
        <begin position="4"/>
        <end position="266"/>
    </location>
</feature>
<feature type="region of interest" description="Regulatory domain" evidence="1">
    <location>
        <begin position="391"/>
        <end position="515"/>
    </location>
</feature>
<feature type="binding site" evidence="1">
    <location>
        <position position="13"/>
    </location>
    <ligand>
        <name>Mn(2+)</name>
        <dbReference type="ChEBI" id="CHEBI:29035"/>
    </ligand>
</feature>
<feature type="binding site" evidence="1">
    <location>
        <position position="201"/>
    </location>
    <ligand>
        <name>Mn(2+)</name>
        <dbReference type="ChEBI" id="CHEBI:29035"/>
    </ligand>
</feature>
<feature type="binding site" evidence="1">
    <location>
        <position position="203"/>
    </location>
    <ligand>
        <name>Mn(2+)</name>
        <dbReference type="ChEBI" id="CHEBI:29035"/>
    </ligand>
</feature>
<feature type="binding site" evidence="1">
    <location>
        <position position="237"/>
    </location>
    <ligand>
        <name>Mn(2+)</name>
        <dbReference type="ChEBI" id="CHEBI:29035"/>
    </ligand>
</feature>
<evidence type="ECO:0000255" key="1">
    <source>
        <dbReference type="HAMAP-Rule" id="MF_01025"/>
    </source>
</evidence>